<protein>
    <recommendedName>
        <fullName evidence="1">2,3-bisphosphoglycerate-dependent phosphoglycerate mutase</fullName>
        <shortName evidence="1">BPG-dependent PGAM</shortName>
        <shortName evidence="1">PGAM</shortName>
        <shortName evidence="1">Phosphoglyceromutase</shortName>
        <shortName evidence="1">dPGM</shortName>
        <ecNumber evidence="1">5.4.2.11</ecNumber>
    </recommendedName>
</protein>
<evidence type="ECO:0000255" key="1">
    <source>
        <dbReference type="HAMAP-Rule" id="MF_01039"/>
    </source>
</evidence>
<sequence length="227" mass="25929">MELVFIRHGQSEWNAKNLFTGWRDVKLSEQGLAEAAAAGKKLKENGYEFDIAFTSVLTRAIKTCNIVLEESDQLFVPQIKTWRLNERHYGRLQGLDKKQTAEKYGDEQVRIWRRSYDTLPPLLDKDDAFSAHKDRRYAHLPADVVPDGENLKVTLERVLPFWEDQIAPAILSGKRVLVAAHGNSLRALAKHIEGISDEDIMGLEIPTGQPLVYKLDDNLKVIEKFYL</sequence>
<organism>
    <name type="scientific">Neisseria gonorrhoeae (strain ATCC 700825 / FA 1090)</name>
    <dbReference type="NCBI Taxonomy" id="242231"/>
    <lineage>
        <taxon>Bacteria</taxon>
        <taxon>Pseudomonadati</taxon>
        <taxon>Pseudomonadota</taxon>
        <taxon>Betaproteobacteria</taxon>
        <taxon>Neisseriales</taxon>
        <taxon>Neisseriaceae</taxon>
        <taxon>Neisseria</taxon>
    </lineage>
</organism>
<dbReference type="EC" id="5.4.2.11" evidence="1"/>
<dbReference type="EMBL" id="AE004969">
    <property type="protein sequence ID" value="AAW89917.1"/>
    <property type="molecule type" value="Genomic_DNA"/>
</dbReference>
<dbReference type="RefSeq" id="WP_003689726.1">
    <property type="nucleotide sequence ID" value="NC_002946.2"/>
</dbReference>
<dbReference type="RefSeq" id="YP_208329.1">
    <property type="nucleotide sequence ID" value="NC_002946.2"/>
</dbReference>
<dbReference type="SMR" id="Q5F7C0"/>
<dbReference type="STRING" id="242231.NGO_1258"/>
<dbReference type="KEGG" id="ngo:NGO_1258"/>
<dbReference type="PATRIC" id="fig|242231.10.peg.1478"/>
<dbReference type="HOGENOM" id="CLU_033323_1_5_4"/>
<dbReference type="UniPathway" id="UPA00109">
    <property type="reaction ID" value="UER00186"/>
</dbReference>
<dbReference type="Proteomes" id="UP000000535">
    <property type="component" value="Chromosome"/>
</dbReference>
<dbReference type="GO" id="GO:0004619">
    <property type="term" value="F:phosphoglycerate mutase activity"/>
    <property type="evidence" value="ECO:0007669"/>
    <property type="project" value="UniProtKB-EC"/>
</dbReference>
<dbReference type="GO" id="GO:0006094">
    <property type="term" value="P:gluconeogenesis"/>
    <property type="evidence" value="ECO:0007669"/>
    <property type="project" value="UniProtKB-UniRule"/>
</dbReference>
<dbReference type="GO" id="GO:0006096">
    <property type="term" value="P:glycolytic process"/>
    <property type="evidence" value="ECO:0007669"/>
    <property type="project" value="UniProtKB-UniRule"/>
</dbReference>
<dbReference type="CDD" id="cd07067">
    <property type="entry name" value="HP_PGM_like"/>
    <property type="match status" value="1"/>
</dbReference>
<dbReference type="FunFam" id="3.40.50.1240:FF:000003">
    <property type="entry name" value="2,3-bisphosphoglycerate-dependent phosphoglycerate mutase"/>
    <property type="match status" value="1"/>
</dbReference>
<dbReference type="Gene3D" id="3.40.50.1240">
    <property type="entry name" value="Phosphoglycerate mutase-like"/>
    <property type="match status" value="1"/>
</dbReference>
<dbReference type="HAMAP" id="MF_01039">
    <property type="entry name" value="PGAM_GpmA"/>
    <property type="match status" value="1"/>
</dbReference>
<dbReference type="InterPro" id="IPR013078">
    <property type="entry name" value="His_Pase_superF_clade-1"/>
</dbReference>
<dbReference type="InterPro" id="IPR029033">
    <property type="entry name" value="His_PPase_superfam"/>
</dbReference>
<dbReference type="InterPro" id="IPR005952">
    <property type="entry name" value="Phosphogly_mut1"/>
</dbReference>
<dbReference type="NCBIfam" id="TIGR01258">
    <property type="entry name" value="pgm_1"/>
    <property type="match status" value="1"/>
</dbReference>
<dbReference type="NCBIfam" id="NF010713">
    <property type="entry name" value="PRK14115.1"/>
    <property type="match status" value="1"/>
</dbReference>
<dbReference type="NCBIfam" id="NF010716">
    <property type="entry name" value="PRK14118.1"/>
    <property type="match status" value="1"/>
</dbReference>
<dbReference type="PANTHER" id="PTHR11931">
    <property type="entry name" value="PHOSPHOGLYCERATE MUTASE"/>
    <property type="match status" value="1"/>
</dbReference>
<dbReference type="Pfam" id="PF00300">
    <property type="entry name" value="His_Phos_1"/>
    <property type="match status" value="2"/>
</dbReference>
<dbReference type="PIRSF" id="PIRSF000709">
    <property type="entry name" value="6PFK_2-Ptase"/>
    <property type="match status" value="1"/>
</dbReference>
<dbReference type="SMART" id="SM00855">
    <property type="entry name" value="PGAM"/>
    <property type="match status" value="1"/>
</dbReference>
<dbReference type="SUPFAM" id="SSF53254">
    <property type="entry name" value="Phosphoglycerate mutase-like"/>
    <property type="match status" value="1"/>
</dbReference>
<feature type="chain" id="PRO_0000229128" description="2,3-bisphosphoglycerate-dependent phosphoglycerate mutase">
    <location>
        <begin position="1"/>
        <end position="227"/>
    </location>
</feature>
<feature type="active site" description="Tele-phosphohistidine intermediate" evidence="1">
    <location>
        <position position="8"/>
    </location>
</feature>
<feature type="active site" description="Proton donor/acceptor" evidence="1">
    <location>
        <position position="86"/>
    </location>
</feature>
<feature type="binding site" evidence="1">
    <location>
        <begin position="7"/>
        <end position="14"/>
    </location>
    <ligand>
        <name>substrate</name>
    </ligand>
</feature>
<feature type="binding site" evidence="1">
    <location>
        <begin position="20"/>
        <end position="21"/>
    </location>
    <ligand>
        <name>substrate</name>
    </ligand>
</feature>
<feature type="binding site" evidence="1">
    <location>
        <position position="59"/>
    </location>
    <ligand>
        <name>substrate</name>
    </ligand>
</feature>
<feature type="binding site" evidence="1">
    <location>
        <begin position="86"/>
        <end position="89"/>
    </location>
    <ligand>
        <name>substrate</name>
    </ligand>
</feature>
<feature type="binding site" evidence="1">
    <location>
        <position position="97"/>
    </location>
    <ligand>
        <name>substrate</name>
    </ligand>
</feature>
<feature type="binding site" evidence="1">
    <location>
        <begin position="113"/>
        <end position="114"/>
    </location>
    <ligand>
        <name>substrate</name>
    </ligand>
</feature>
<feature type="binding site" evidence="1">
    <location>
        <begin position="182"/>
        <end position="183"/>
    </location>
    <ligand>
        <name>substrate</name>
    </ligand>
</feature>
<feature type="site" description="Transition state stabilizer" evidence="1">
    <location>
        <position position="181"/>
    </location>
</feature>
<accession>Q5F7C0</accession>
<proteinExistence type="inferred from homology"/>
<comment type="function">
    <text evidence="1">Catalyzes the interconversion of 2-phosphoglycerate and 3-phosphoglycerate.</text>
</comment>
<comment type="catalytic activity">
    <reaction evidence="1">
        <text>(2R)-2-phosphoglycerate = (2R)-3-phosphoglycerate</text>
        <dbReference type="Rhea" id="RHEA:15901"/>
        <dbReference type="ChEBI" id="CHEBI:58272"/>
        <dbReference type="ChEBI" id="CHEBI:58289"/>
        <dbReference type="EC" id="5.4.2.11"/>
    </reaction>
</comment>
<comment type="pathway">
    <text evidence="1">Carbohydrate degradation; glycolysis; pyruvate from D-glyceraldehyde 3-phosphate: step 3/5.</text>
</comment>
<comment type="subunit">
    <text evidence="1">Homodimer.</text>
</comment>
<comment type="similarity">
    <text evidence="1">Belongs to the phosphoglycerate mutase family. BPG-dependent PGAM subfamily.</text>
</comment>
<gene>
    <name evidence="1" type="primary">gpmA</name>
    <name type="ordered locus">NGO_1258</name>
</gene>
<reference key="1">
    <citation type="submission" date="2003-03" db="EMBL/GenBank/DDBJ databases">
        <title>The complete genome sequence of Neisseria gonorrhoeae.</title>
        <authorList>
            <person name="Lewis L.A."/>
            <person name="Gillaspy A.F."/>
            <person name="McLaughlin R.E."/>
            <person name="Gipson M."/>
            <person name="Ducey T.F."/>
            <person name="Ownbey T."/>
            <person name="Hartman K."/>
            <person name="Nydick C."/>
            <person name="Carson M.B."/>
            <person name="Vaughn J."/>
            <person name="Thomson C."/>
            <person name="Song L."/>
            <person name="Lin S."/>
            <person name="Yuan X."/>
            <person name="Najar F."/>
            <person name="Zhan M."/>
            <person name="Ren Q."/>
            <person name="Zhu H."/>
            <person name="Qi S."/>
            <person name="Kenton S.M."/>
            <person name="Lai H."/>
            <person name="White J.D."/>
            <person name="Clifton S."/>
            <person name="Roe B.A."/>
            <person name="Dyer D.W."/>
        </authorList>
    </citation>
    <scope>NUCLEOTIDE SEQUENCE [LARGE SCALE GENOMIC DNA]</scope>
    <source>
        <strain>ATCC 700825 / FA 1090</strain>
    </source>
</reference>
<name>GPMA_NEIG1</name>
<keyword id="KW-0312">Gluconeogenesis</keyword>
<keyword id="KW-0324">Glycolysis</keyword>
<keyword id="KW-0413">Isomerase</keyword>
<keyword id="KW-1185">Reference proteome</keyword>